<organism>
    <name type="scientific">Methanothrix thermoacetophila (strain DSM 6194 / JCM 14653 / NBRC 101360 / PT)</name>
    <name type="common">Methanosaeta thermophila</name>
    <dbReference type="NCBI Taxonomy" id="349307"/>
    <lineage>
        <taxon>Archaea</taxon>
        <taxon>Methanobacteriati</taxon>
        <taxon>Methanobacteriota</taxon>
        <taxon>Stenosarchaea group</taxon>
        <taxon>Methanomicrobia</taxon>
        <taxon>Methanotrichales</taxon>
        <taxon>Methanotrichaceae</taxon>
        <taxon>Methanothrix</taxon>
    </lineage>
</organism>
<reference key="1">
    <citation type="submission" date="2006-10" db="EMBL/GenBank/DDBJ databases">
        <title>Complete sequence of Methanosaeta thermophila PT.</title>
        <authorList>
            <consortium name="US DOE Joint Genome Institute"/>
            <person name="Copeland A."/>
            <person name="Lucas S."/>
            <person name="Lapidus A."/>
            <person name="Barry K."/>
            <person name="Detter J.C."/>
            <person name="Glavina del Rio T."/>
            <person name="Hammon N."/>
            <person name="Israni S."/>
            <person name="Pitluck S."/>
            <person name="Chain P."/>
            <person name="Malfatti S."/>
            <person name="Shin M."/>
            <person name="Vergez L."/>
            <person name="Schmutz J."/>
            <person name="Larimer F."/>
            <person name="Land M."/>
            <person name="Hauser L."/>
            <person name="Kyrpides N."/>
            <person name="Kim E."/>
            <person name="Smith K.S."/>
            <person name="Ingram-Smith C."/>
            <person name="Richardson P."/>
        </authorList>
    </citation>
    <scope>NUCLEOTIDE SEQUENCE [LARGE SCALE GENOMIC DNA]</scope>
    <source>
        <strain>DSM 6194 / JCM 14653 / NBRC 101360 / PT</strain>
    </source>
</reference>
<dbReference type="EMBL" id="CP000477">
    <property type="protein sequence ID" value="ABK15487.1"/>
    <property type="molecule type" value="Genomic_DNA"/>
</dbReference>
<dbReference type="RefSeq" id="WP_011696865.1">
    <property type="nucleotide sequence ID" value="NC_008553.1"/>
</dbReference>
<dbReference type="SMR" id="A0B9W3"/>
<dbReference type="STRING" id="349307.Mthe_1721"/>
<dbReference type="GeneID" id="4462914"/>
<dbReference type="KEGG" id="mtp:Mthe_1721"/>
<dbReference type="HOGENOM" id="CLU_158491_2_2_2"/>
<dbReference type="OrthoDB" id="11736at2157"/>
<dbReference type="Proteomes" id="UP000000674">
    <property type="component" value="Chromosome"/>
</dbReference>
<dbReference type="GO" id="GO:0022625">
    <property type="term" value="C:cytosolic large ribosomal subunit"/>
    <property type="evidence" value="ECO:0007669"/>
    <property type="project" value="TreeGrafter"/>
</dbReference>
<dbReference type="GO" id="GO:0003735">
    <property type="term" value="F:structural constituent of ribosome"/>
    <property type="evidence" value="ECO:0007669"/>
    <property type="project" value="InterPro"/>
</dbReference>
<dbReference type="GO" id="GO:0006412">
    <property type="term" value="P:translation"/>
    <property type="evidence" value="ECO:0007669"/>
    <property type="project" value="UniProtKB-UniRule"/>
</dbReference>
<dbReference type="FunFam" id="1.10.287.310:FF:000001">
    <property type="entry name" value="50S ribosomal protein L29"/>
    <property type="match status" value="1"/>
</dbReference>
<dbReference type="Gene3D" id="1.10.287.310">
    <property type="match status" value="1"/>
</dbReference>
<dbReference type="HAMAP" id="MF_00374">
    <property type="entry name" value="Ribosomal_uL29"/>
    <property type="match status" value="1"/>
</dbReference>
<dbReference type="InterPro" id="IPR050063">
    <property type="entry name" value="Ribosomal_protein_uL29"/>
</dbReference>
<dbReference type="InterPro" id="IPR001854">
    <property type="entry name" value="Ribosomal_uL29"/>
</dbReference>
<dbReference type="InterPro" id="IPR018254">
    <property type="entry name" value="Ribosomal_uL29_CS"/>
</dbReference>
<dbReference type="InterPro" id="IPR036049">
    <property type="entry name" value="Ribosomal_uL29_sf"/>
</dbReference>
<dbReference type="NCBIfam" id="TIGR00012">
    <property type="entry name" value="L29"/>
    <property type="match status" value="1"/>
</dbReference>
<dbReference type="PANTHER" id="PTHR10916">
    <property type="entry name" value="60S RIBOSOMAL PROTEIN L35/50S RIBOSOMAL PROTEIN L29"/>
    <property type="match status" value="1"/>
</dbReference>
<dbReference type="PANTHER" id="PTHR10916:SF0">
    <property type="entry name" value="LARGE RIBOSOMAL SUBUNIT PROTEIN UL29C"/>
    <property type="match status" value="1"/>
</dbReference>
<dbReference type="Pfam" id="PF00831">
    <property type="entry name" value="Ribosomal_L29"/>
    <property type="match status" value="1"/>
</dbReference>
<dbReference type="SUPFAM" id="SSF46561">
    <property type="entry name" value="Ribosomal protein L29 (L29p)"/>
    <property type="match status" value="1"/>
</dbReference>
<dbReference type="PROSITE" id="PS00579">
    <property type="entry name" value="RIBOSOMAL_L29"/>
    <property type="match status" value="1"/>
</dbReference>
<protein>
    <recommendedName>
        <fullName evidence="1">Large ribosomal subunit protein uL29</fullName>
    </recommendedName>
    <alternativeName>
        <fullName evidence="2">50S ribosomal protein L29</fullName>
    </alternativeName>
</protein>
<evidence type="ECO:0000255" key="1">
    <source>
        <dbReference type="HAMAP-Rule" id="MF_00374"/>
    </source>
</evidence>
<evidence type="ECO:0000305" key="2"/>
<gene>
    <name evidence="1" type="primary">rpl29</name>
    <name type="ordered locus">Mthe_1721</name>
</gene>
<keyword id="KW-1185">Reference proteome</keyword>
<keyword id="KW-0687">Ribonucleoprotein</keyword>
<keyword id="KW-0689">Ribosomal protein</keyword>
<accession>A0B9W3</accession>
<proteinExistence type="inferred from homology"/>
<name>RL29_METTP</name>
<feature type="chain" id="PRO_1000007524" description="Large ribosomal subunit protein uL29">
    <location>
        <begin position="1"/>
        <end position="67"/>
    </location>
</feature>
<comment type="similarity">
    <text evidence="1">Belongs to the universal ribosomal protein uL29 family.</text>
</comment>
<sequence length="67" mass="7960">MAIFRIDEIRNMSSEELEEELRKLEVELIRERGAVRAGGAPEKPGRIREIRRTIARMKTVQRERVRK</sequence>